<feature type="chain" id="PRO_1000011948" description="Diaminopimelate epimerase">
    <location>
        <begin position="1"/>
        <end position="293"/>
    </location>
</feature>
<feature type="active site" description="Proton donor" evidence="1">
    <location>
        <position position="76"/>
    </location>
</feature>
<feature type="active site" description="Proton acceptor" evidence="1">
    <location>
        <position position="224"/>
    </location>
</feature>
<feature type="binding site" evidence="1">
    <location>
        <position position="17"/>
    </location>
    <ligand>
        <name>substrate</name>
    </ligand>
</feature>
<feature type="binding site" evidence="1">
    <location>
        <position position="47"/>
    </location>
    <ligand>
        <name>substrate</name>
    </ligand>
</feature>
<feature type="binding site" evidence="1">
    <location>
        <position position="67"/>
    </location>
    <ligand>
        <name>substrate</name>
    </ligand>
</feature>
<feature type="binding site" evidence="1">
    <location>
        <begin position="77"/>
        <end position="78"/>
    </location>
    <ligand>
        <name>substrate</name>
    </ligand>
</feature>
<feature type="binding site" evidence="1">
    <location>
        <position position="164"/>
    </location>
    <ligand>
        <name>substrate</name>
    </ligand>
</feature>
<feature type="binding site" evidence="1">
    <location>
        <position position="197"/>
    </location>
    <ligand>
        <name>substrate</name>
    </ligand>
</feature>
<feature type="binding site" evidence="1">
    <location>
        <begin position="215"/>
        <end position="216"/>
    </location>
    <ligand>
        <name>substrate</name>
    </ligand>
</feature>
<feature type="binding site" evidence="1">
    <location>
        <begin position="225"/>
        <end position="226"/>
    </location>
    <ligand>
        <name>substrate</name>
    </ligand>
</feature>
<feature type="site" description="Could be important to modulate the pK values of the two catalytic cysteine residues" evidence="1">
    <location>
        <position position="166"/>
    </location>
</feature>
<feature type="site" description="Could be important to modulate the pK values of the two catalytic cysteine residues" evidence="1">
    <location>
        <position position="215"/>
    </location>
</feature>
<gene>
    <name evidence="1" type="primary">dapF</name>
    <name type="ordered locus">RPA0250</name>
</gene>
<name>DAPF_RHOPA</name>
<proteinExistence type="inferred from homology"/>
<accession>Q6ND59</accession>
<keyword id="KW-0028">Amino-acid biosynthesis</keyword>
<keyword id="KW-0963">Cytoplasm</keyword>
<keyword id="KW-0413">Isomerase</keyword>
<keyword id="KW-0457">Lysine biosynthesis</keyword>
<dbReference type="EC" id="5.1.1.7" evidence="1"/>
<dbReference type="EMBL" id="BX572593">
    <property type="protein sequence ID" value="CAE25694.1"/>
    <property type="molecule type" value="Genomic_DNA"/>
</dbReference>
<dbReference type="RefSeq" id="WP_011155818.1">
    <property type="nucleotide sequence ID" value="NZ_CP116810.1"/>
</dbReference>
<dbReference type="SMR" id="Q6ND59"/>
<dbReference type="STRING" id="258594.RPA0250"/>
<dbReference type="GeneID" id="66891258"/>
<dbReference type="eggNOG" id="COG0253">
    <property type="taxonomic scope" value="Bacteria"/>
</dbReference>
<dbReference type="HOGENOM" id="CLU_053306_1_0_5"/>
<dbReference type="PhylomeDB" id="Q6ND59"/>
<dbReference type="UniPathway" id="UPA00034">
    <property type="reaction ID" value="UER00025"/>
</dbReference>
<dbReference type="GO" id="GO:0005829">
    <property type="term" value="C:cytosol"/>
    <property type="evidence" value="ECO:0007669"/>
    <property type="project" value="TreeGrafter"/>
</dbReference>
<dbReference type="GO" id="GO:0008837">
    <property type="term" value="F:diaminopimelate epimerase activity"/>
    <property type="evidence" value="ECO:0007669"/>
    <property type="project" value="UniProtKB-UniRule"/>
</dbReference>
<dbReference type="GO" id="GO:0009089">
    <property type="term" value="P:lysine biosynthetic process via diaminopimelate"/>
    <property type="evidence" value="ECO:0007669"/>
    <property type="project" value="UniProtKB-UniRule"/>
</dbReference>
<dbReference type="FunFam" id="3.10.310.10:FF:000004">
    <property type="entry name" value="Diaminopimelate epimerase"/>
    <property type="match status" value="1"/>
</dbReference>
<dbReference type="Gene3D" id="3.10.310.10">
    <property type="entry name" value="Diaminopimelate Epimerase, Chain A, domain 1"/>
    <property type="match status" value="2"/>
</dbReference>
<dbReference type="HAMAP" id="MF_00197">
    <property type="entry name" value="DAP_epimerase"/>
    <property type="match status" value="1"/>
</dbReference>
<dbReference type="InterPro" id="IPR018510">
    <property type="entry name" value="DAP_epimerase_AS"/>
</dbReference>
<dbReference type="InterPro" id="IPR001653">
    <property type="entry name" value="DAP_epimerase_DapF"/>
</dbReference>
<dbReference type="NCBIfam" id="TIGR00652">
    <property type="entry name" value="DapF"/>
    <property type="match status" value="1"/>
</dbReference>
<dbReference type="PANTHER" id="PTHR31689:SF0">
    <property type="entry name" value="DIAMINOPIMELATE EPIMERASE"/>
    <property type="match status" value="1"/>
</dbReference>
<dbReference type="PANTHER" id="PTHR31689">
    <property type="entry name" value="DIAMINOPIMELATE EPIMERASE, CHLOROPLASTIC"/>
    <property type="match status" value="1"/>
</dbReference>
<dbReference type="Pfam" id="PF01678">
    <property type="entry name" value="DAP_epimerase"/>
    <property type="match status" value="2"/>
</dbReference>
<dbReference type="SUPFAM" id="SSF54506">
    <property type="entry name" value="Diaminopimelate epimerase-like"/>
    <property type="match status" value="2"/>
</dbReference>
<dbReference type="PROSITE" id="PS01326">
    <property type="entry name" value="DAP_EPIMERASE"/>
    <property type="match status" value="1"/>
</dbReference>
<comment type="function">
    <text evidence="1">Catalyzes the stereoinversion of LL-2,6-diaminopimelate (L,L-DAP) to meso-diaminopimelate (meso-DAP), a precursor of L-lysine and an essential component of the bacterial peptidoglycan.</text>
</comment>
<comment type="catalytic activity">
    <reaction evidence="1">
        <text>(2S,6S)-2,6-diaminopimelate = meso-2,6-diaminopimelate</text>
        <dbReference type="Rhea" id="RHEA:15393"/>
        <dbReference type="ChEBI" id="CHEBI:57609"/>
        <dbReference type="ChEBI" id="CHEBI:57791"/>
        <dbReference type="EC" id="5.1.1.7"/>
    </reaction>
</comment>
<comment type="pathway">
    <text evidence="1">Amino-acid biosynthesis; L-lysine biosynthesis via DAP pathway; DL-2,6-diaminopimelate from LL-2,6-diaminopimelate: step 1/1.</text>
</comment>
<comment type="subunit">
    <text evidence="1">Homodimer.</text>
</comment>
<comment type="subcellular location">
    <subcellularLocation>
        <location evidence="1">Cytoplasm</location>
    </subcellularLocation>
</comment>
<comment type="similarity">
    <text evidence="1">Belongs to the diaminopimelate epimerase family.</text>
</comment>
<sequence>MSALDNRLFAKMNGIGNEIVVVDLRDQPAPVTPADARAVAAHVPYDQLMLLQPARLSGTEAFVRIYNNDGSESGACGNGMRCVARQMFSGSEKNGLTFETRAGLLNCWRGPADGLYTVDMGEPKFGWQDIPLAEEFRDTRMIELQIGPIDAPVLHTPSVVSMGNPHAIFWVDDVNAYDLGRFGPLLENHPIFPERANITLAHIVDRQHITMRTWERGAGLTKACGSAACSTAVAAARLKRTDRTVEMTLPGGQLTIEWRESDNHVLMTGGAAFEFEGRFDPALFSGALDPTGA</sequence>
<reference key="1">
    <citation type="journal article" date="2004" name="Nat. Biotechnol.">
        <title>Complete genome sequence of the metabolically versatile photosynthetic bacterium Rhodopseudomonas palustris.</title>
        <authorList>
            <person name="Larimer F.W."/>
            <person name="Chain P."/>
            <person name="Hauser L."/>
            <person name="Lamerdin J.E."/>
            <person name="Malfatti S."/>
            <person name="Do L."/>
            <person name="Land M.L."/>
            <person name="Pelletier D.A."/>
            <person name="Beatty J.T."/>
            <person name="Lang A.S."/>
            <person name="Tabita F.R."/>
            <person name="Gibson J.L."/>
            <person name="Hanson T.E."/>
            <person name="Bobst C."/>
            <person name="Torres y Torres J.L."/>
            <person name="Peres C."/>
            <person name="Harrison F.H."/>
            <person name="Gibson J."/>
            <person name="Harwood C.S."/>
        </authorList>
    </citation>
    <scope>NUCLEOTIDE SEQUENCE [LARGE SCALE GENOMIC DNA]</scope>
    <source>
        <strain>ATCC BAA-98 / CGA009</strain>
    </source>
</reference>
<evidence type="ECO:0000255" key="1">
    <source>
        <dbReference type="HAMAP-Rule" id="MF_00197"/>
    </source>
</evidence>
<organism>
    <name type="scientific">Rhodopseudomonas palustris (strain ATCC BAA-98 / CGA009)</name>
    <dbReference type="NCBI Taxonomy" id="258594"/>
    <lineage>
        <taxon>Bacteria</taxon>
        <taxon>Pseudomonadati</taxon>
        <taxon>Pseudomonadota</taxon>
        <taxon>Alphaproteobacteria</taxon>
        <taxon>Hyphomicrobiales</taxon>
        <taxon>Nitrobacteraceae</taxon>
        <taxon>Rhodopseudomonas</taxon>
    </lineage>
</organism>
<protein>
    <recommendedName>
        <fullName evidence="1">Diaminopimelate epimerase</fullName>
        <shortName evidence="1">DAP epimerase</shortName>
        <ecNumber evidence="1">5.1.1.7</ecNumber>
    </recommendedName>
    <alternativeName>
        <fullName evidence="1">PLP-independent amino acid racemase</fullName>
    </alternativeName>
</protein>